<gene>
    <name evidence="1" type="primary">thyA</name>
    <name type="ordered locus">Sbal223_3125</name>
</gene>
<feature type="chain" id="PRO_1000197259" description="Thymidylate synthase">
    <location>
        <begin position="1"/>
        <end position="264"/>
    </location>
</feature>
<feature type="active site" description="Nucleophile" evidence="1">
    <location>
        <position position="146"/>
    </location>
</feature>
<feature type="binding site" description="in other chain" evidence="1">
    <location>
        <position position="21"/>
    </location>
    <ligand>
        <name>dUMP</name>
        <dbReference type="ChEBI" id="CHEBI:246422"/>
        <note>ligand shared between dimeric partners</note>
    </ligand>
</feature>
<feature type="binding site" evidence="1">
    <location>
        <position position="51"/>
    </location>
    <ligand>
        <name>(6R)-5,10-methylene-5,6,7,8-tetrahydrofolate</name>
        <dbReference type="ChEBI" id="CHEBI:15636"/>
    </ligand>
</feature>
<feature type="binding site" evidence="1">
    <location>
        <begin position="126"/>
        <end position="127"/>
    </location>
    <ligand>
        <name>dUMP</name>
        <dbReference type="ChEBI" id="CHEBI:246422"/>
        <note>ligand shared between dimeric partners</note>
    </ligand>
</feature>
<feature type="binding site" description="in other chain" evidence="1">
    <location>
        <begin position="166"/>
        <end position="169"/>
    </location>
    <ligand>
        <name>dUMP</name>
        <dbReference type="ChEBI" id="CHEBI:246422"/>
        <note>ligand shared between dimeric partners</note>
    </ligand>
</feature>
<feature type="binding site" evidence="1">
    <location>
        <position position="169"/>
    </location>
    <ligand>
        <name>(6R)-5,10-methylene-5,6,7,8-tetrahydrofolate</name>
        <dbReference type="ChEBI" id="CHEBI:15636"/>
    </ligand>
</feature>
<feature type="binding site" description="in other chain" evidence="1">
    <location>
        <position position="177"/>
    </location>
    <ligand>
        <name>dUMP</name>
        <dbReference type="ChEBI" id="CHEBI:246422"/>
        <note>ligand shared between dimeric partners</note>
    </ligand>
</feature>
<feature type="binding site" description="in other chain" evidence="1">
    <location>
        <begin position="207"/>
        <end position="209"/>
    </location>
    <ligand>
        <name>dUMP</name>
        <dbReference type="ChEBI" id="CHEBI:246422"/>
        <note>ligand shared between dimeric partners</note>
    </ligand>
</feature>
<feature type="binding site" evidence="1">
    <location>
        <position position="263"/>
    </location>
    <ligand>
        <name>(6R)-5,10-methylene-5,6,7,8-tetrahydrofolate</name>
        <dbReference type="ChEBI" id="CHEBI:15636"/>
    </ligand>
</feature>
<sequence>MKQYLDLMKHILAEGVDKSDRTGTGTRSVFGYQMRFDLSKGFPLVSTKKCHMRSIIHELLWFLKGETNVAYLRENKVSIWDEWADDNGDLGPVYGAQWRSWPTQSGDAIDQISQVIAQIKSQPDSRRLIVSAWNVGELDKMALAPCHAFFQFYVADGKLSCQLYQRSCDVFLGLPFNIASYALLTMMVAQQCDLALGDFVWTGGDTHLYSNHMEQTALQLSREPMPLPTMTILRKPESIFDYQFDDFELTNYAPHPHIKAPVAV</sequence>
<organism>
    <name type="scientific">Shewanella baltica (strain OS223)</name>
    <dbReference type="NCBI Taxonomy" id="407976"/>
    <lineage>
        <taxon>Bacteria</taxon>
        <taxon>Pseudomonadati</taxon>
        <taxon>Pseudomonadota</taxon>
        <taxon>Gammaproteobacteria</taxon>
        <taxon>Alteromonadales</taxon>
        <taxon>Shewanellaceae</taxon>
        <taxon>Shewanella</taxon>
    </lineage>
</organism>
<name>TYSY_SHEB2</name>
<reference key="1">
    <citation type="submission" date="2008-12" db="EMBL/GenBank/DDBJ databases">
        <title>Complete sequence of chromosome of Shewanella baltica OS223.</title>
        <authorList>
            <consortium name="US DOE Joint Genome Institute"/>
            <person name="Lucas S."/>
            <person name="Copeland A."/>
            <person name="Lapidus A."/>
            <person name="Glavina del Rio T."/>
            <person name="Dalin E."/>
            <person name="Tice H."/>
            <person name="Bruce D."/>
            <person name="Goodwin L."/>
            <person name="Pitluck S."/>
            <person name="Chertkov O."/>
            <person name="Meincke L."/>
            <person name="Brettin T."/>
            <person name="Detter J.C."/>
            <person name="Han C."/>
            <person name="Kuske C.R."/>
            <person name="Larimer F."/>
            <person name="Land M."/>
            <person name="Hauser L."/>
            <person name="Kyrpides N."/>
            <person name="Ovchinnikova G."/>
            <person name="Brettar I."/>
            <person name="Rodrigues J."/>
            <person name="Konstantinidis K."/>
            <person name="Tiedje J."/>
        </authorList>
    </citation>
    <scope>NUCLEOTIDE SEQUENCE [LARGE SCALE GENOMIC DNA]</scope>
    <source>
        <strain>OS223</strain>
    </source>
</reference>
<keyword id="KW-0963">Cytoplasm</keyword>
<keyword id="KW-0489">Methyltransferase</keyword>
<keyword id="KW-0545">Nucleotide biosynthesis</keyword>
<keyword id="KW-0808">Transferase</keyword>
<comment type="function">
    <text evidence="1">Catalyzes the reductive methylation of 2'-deoxyuridine-5'-monophosphate (dUMP) to 2'-deoxythymidine-5'-monophosphate (dTMP) while utilizing 5,10-methylenetetrahydrofolate (mTHF) as the methyl donor and reductant in the reaction, yielding dihydrofolate (DHF) as a by-product. This enzymatic reaction provides an intracellular de novo source of dTMP, an essential precursor for DNA biosynthesis.</text>
</comment>
<comment type="catalytic activity">
    <reaction evidence="1">
        <text>dUMP + (6R)-5,10-methylene-5,6,7,8-tetrahydrofolate = 7,8-dihydrofolate + dTMP</text>
        <dbReference type="Rhea" id="RHEA:12104"/>
        <dbReference type="ChEBI" id="CHEBI:15636"/>
        <dbReference type="ChEBI" id="CHEBI:57451"/>
        <dbReference type="ChEBI" id="CHEBI:63528"/>
        <dbReference type="ChEBI" id="CHEBI:246422"/>
        <dbReference type="EC" id="2.1.1.45"/>
    </reaction>
</comment>
<comment type="pathway">
    <text evidence="1">Pyrimidine metabolism; dTTP biosynthesis.</text>
</comment>
<comment type="subunit">
    <text evidence="1">Homodimer.</text>
</comment>
<comment type="subcellular location">
    <subcellularLocation>
        <location evidence="1">Cytoplasm</location>
    </subcellularLocation>
</comment>
<comment type="similarity">
    <text evidence="1">Belongs to the thymidylate synthase family. Bacterial-type ThyA subfamily.</text>
</comment>
<dbReference type="EC" id="2.1.1.45" evidence="1"/>
<dbReference type="EMBL" id="CP001252">
    <property type="protein sequence ID" value="ACK47610.1"/>
    <property type="molecule type" value="Genomic_DNA"/>
</dbReference>
<dbReference type="RefSeq" id="WP_006080766.1">
    <property type="nucleotide sequence ID" value="NC_011663.1"/>
</dbReference>
<dbReference type="SMR" id="B8EBR5"/>
<dbReference type="KEGG" id="sbp:Sbal223_3125"/>
<dbReference type="HOGENOM" id="CLU_021669_0_0_6"/>
<dbReference type="UniPathway" id="UPA00575"/>
<dbReference type="Proteomes" id="UP000002507">
    <property type="component" value="Chromosome"/>
</dbReference>
<dbReference type="GO" id="GO:0005829">
    <property type="term" value="C:cytosol"/>
    <property type="evidence" value="ECO:0007669"/>
    <property type="project" value="TreeGrafter"/>
</dbReference>
<dbReference type="GO" id="GO:0004799">
    <property type="term" value="F:thymidylate synthase activity"/>
    <property type="evidence" value="ECO:0007669"/>
    <property type="project" value="UniProtKB-UniRule"/>
</dbReference>
<dbReference type="GO" id="GO:0006231">
    <property type="term" value="P:dTMP biosynthetic process"/>
    <property type="evidence" value="ECO:0007669"/>
    <property type="project" value="UniProtKB-UniRule"/>
</dbReference>
<dbReference type="GO" id="GO:0006235">
    <property type="term" value="P:dTTP biosynthetic process"/>
    <property type="evidence" value="ECO:0007669"/>
    <property type="project" value="UniProtKB-UniRule"/>
</dbReference>
<dbReference type="GO" id="GO:0032259">
    <property type="term" value="P:methylation"/>
    <property type="evidence" value="ECO:0007669"/>
    <property type="project" value="UniProtKB-KW"/>
</dbReference>
<dbReference type="CDD" id="cd00351">
    <property type="entry name" value="TS_Pyrimidine_HMase"/>
    <property type="match status" value="1"/>
</dbReference>
<dbReference type="FunFam" id="3.30.572.10:FF:000001">
    <property type="entry name" value="Thymidylate synthase"/>
    <property type="match status" value="1"/>
</dbReference>
<dbReference type="Gene3D" id="3.30.572.10">
    <property type="entry name" value="Thymidylate synthase/dCMP hydroxymethylase domain"/>
    <property type="match status" value="1"/>
</dbReference>
<dbReference type="HAMAP" id="MF_00008">
    <property type="entry name" value="Thymidy_synth_bact"/>
    <property type="match status" value="1"/>
</dbReference>
<dbReference type="InterPro" id="IPR045097">
    <property type="entry name" value="Thymidate_synth/dCMP_Mease"/>
</dbReference>
<dbReference type="InterPro" id="IPR023451">
    <property type="entry name" value="Thymidate_synth/dCMP_Mease_dom"/>
</dbReference>
<dbReference type="InterPro" id="IPR036926">
    <property type="entry name" value="Thymidate_synth/dCMP_Mease_sf"/>
</dbReference>
<dbReference type="InterPro" id="IPR000398">
    <property type="entry name" value="Thymidylate_synthase"/>
</dbReference>
<dbReference type="InterPro" id="IPR020940">
    <property type="entry name" value="Thymidylate_synthase_AS"/>
</dbReference>
<dbReference type="NCBIfam" id="NF002497">
    <property type="entry name" value="PRK01827.1-3"/>
    <property type="match status" value="1"/>
</dbReference>
<dbReference type="NCBIfam" id="NF002499">
    <property type="entry name" value="PRK01827.1-5"/>
    <property type="match status" value="1"/>
</dbReference>
<dbReference type="NCBIfam" id="TIGR03284">
    <property type="entry name" value="thym_sym"/>
    <property type="match status" value="2"/>
</dbReference>
<dbReference type="PANTHER" id="PTHR11548:SF9">
    <property type="entry name" value="THYMIDYLATE SYNTHASE"/>
    <property type="match status" value="1"/>
</dbReference>
<dbReference type="PANTHER" id="PTHR11548">
    <property type="entry name" value="THYMIDYLATE SYNTHASE 1"/>
    <property type="match status" value="1"/>
</dbReference>
<dbReference type="Pfam" id="PF00303">
    <property type="entry name" value="Thymidylat_synt"/>
    <property type="match status" value="1"/>
</dbReference>
<dbReference type="PRINTS" id="PR00108">
    <property type="entry name" value="THYMDSNTHASE"/>
</dbReference>
<dbReference type="SUPFAM" id="SSF55831">
    <property type="entry name" value="Thymidylate synthase/dCMP hydroxymethylase"/>
    <property type="match status" value="1"/>
</dbReference>
<dbReference type="PROSITE" id="PS00091">
    <property type="entry name" value="THYMIDYLATE_SYNTHASE"/>
    <property type="match status" value="1"/>
</dbReference>
<evidence type="ECO:0000255" key="1">
    <source>
        <dbReference type="HAMAP-Rule" id="MF_00008"/>
    </source>
</evidence>
<protein>
    <recommendedName>
        <fullName evidence="1">Thymidylate synthase</fullName>
        <shortName evidence="1">TS</shortName>
        <shortName evidence="1">TSase</shortName>
        <ecNumber evidence="1">2.1.1.45</ecNumber>
    </recommendedName>
</protein>
<proteinExistence type="inferred from homology"/>
<accession>B8EBR5</accession>